<gene>
    <name type="primary">dnaE</name>
    <name type="ordered locus">RBE_0074</name>
</gene>
<dbReference type="EC" id="2.7.7.7"/>
<dbReference type="EMBL" id="CP000087">
    <property type="protein sequence ID" value="ABE04155.1"/>
    <property type="molecule type" value="Genomic_DNA"/>
</dbReference>
<dbReference type="RefSeq" id="WP_011476770.1">
    <property type="nucleotide sequence ID" value="NC_007940.1"/>
</dbReference>
<dbReference type="SMR" id="Q1RKF9"/>
<dbReference type="KEGG" id="rbe:RBE_0074"/>
<dbReference type="eggNOG" id="COG0587">
    <property type="taxonomic scope" value="Bacteria"/>
</dbReference>
<dbReference type="HOGENOM" id="CLU_001600_0_0_5"/>
<dbReference type="OrthoDB" id="9803237at2"/>
<dbReference type="Proteomes" id="UP000001951">
    <property type="component" value="Chromosome"/>
</dbReference>
<dbReference type="GO" id="GO:0005737">
    <property type="term" value="C:cytoplasm"/>
    <property type="evidence" value="ECO:0007669"/>
    <property type="project" value="UniProtKB-SubCell"/>
</dbReference>
<dbReference type="GO" id="GO:0008408">
    <property type="term" value="F:3'-5' exonuclease activity"/>
    <property type="evidence" value="ECO:0007669"/>
    <property type="project" value="InterPro"/>
</dbReference>
<dbReference type="GO" id="GO:0003887">
    <property type="term" value="F:DNA-directed DNA polymerase activity"/>
    <property type="evidence" value="ECO:0007669"/>
    <property type="project" value="UniProtKB-KW"/>
</dbReference>
<dbReference type="GO" id="GO:0006260">
    <property type="term" value="P:DNA replication"/>
    <property type="evidence" value="ECO:0007669"/>
    <property type="project" value="UniProtKB-KW"/>
</dbReference>
<dbReference type="CDD" id="cd04485">
    <property type="entry name" value="DnaE_OBF"/>
    <property type="match status" value="1"/>
</dbReference>
<dbReference type="CDD" id="cd07433">
    <property type="entry name" value="PHP_PolIIIA_DnaE1"/>
    <property type="match status" value="1"/>
</dbReference>
<dbReference type="Gene3D" id="1.10.150.870">
    <property type="match status" value="1"/>
</dbReference>
<dbReference type="Gene3D" id="1.10.10.1600">
    <property type="entry name" value="Bacterial DNA polymerase III alpha subunit, thumb domain"/>
    <property type="match status" value="1"/>
</dbReference>
<dbReference type="Gene3D" id="3.20.20.140">
    <property type="entry name" value="Metal-dependent hydrolases"/>
    <property type="match status" value="1"/>
</dbReference>
<dbReference type="InterPro" id="IPR011708">
    <property type="entry name" value="DNA_pol3_alpha_NTPase_dom"/>
</dbReference>
<dbReference type="InterPro" id="IPR041931">
    <property type="entry name" value="DNA_pol3_alpha_thumb_dom"/>
</dbReference>
<dbReference type="InterPro" id="IPR040982">
    <property type="entry name" value="DNA_pol3_finger"/>
</dbReference>
<dbReference type="InterPro" id="IPR004805">
    <property type="entry name" value="DnaE2/DnaE/PolC"/>
</dbReference>
<dbReference type="InterPro" id="IPR029460">
    <property type="entry name" value="DNAPol_HHH"/>
</dbReference>
<dbReference type="InterPro" id="IPR004013">
    <property type="entry name" value="PHP_dom"/>
</dbReference>
<dbReference type="InterPro" id="IPR003141">
    <property type="entry name" value="Pol/His_phosphatase_N"/>
</dbReference>
<dbReference type="InterPro" id="IPR016195">
    <property type="entry name" value="Pol/histidinol_Pase-like"/>
</dbReference>
<dbReference type="InterPro" id="IPR049821">
    <property type="entry name" value="PolIIIA_DnaE1_PHP"/>
</dbReference>
<dbReference type="NCBIfam" id="TIGR00594">
    <property type="entry name" value="polc"/>
    <property type="match status" value="1"/>
</dbReference>
<dbReference type="NCBIfam" id="NF004226">
    <property type="entry name" value="PRK05673.1"/>
    <property type="match status" value="1"/>
</dbReference>
<dbReference type="PANTHER" id="PTHR32294">
    <property type="entry name" value="DNA POLYMERASE III SUBUNIT ALPHA"/>
    <property type="match status" value="1"/>
</dbReference>
<dbReference type="PANTHER" id="PTHR32294:SF0">
    <property type="entry name" value="DNA POLYMERASE III SUBUNIT ALPHA"/>
    <property type="match status" value="1"/>
</dbReference>
<dbReference type="Pfam" id="PF07733">
    <property type="entry name" value="DNA_pol3_alpha"/>
    <property type="match status" value="1"/>
</dbReference>
<dbReference type="Pfam" id="PF17657">
    <property type="entry name" value="DNA_pol3_finger"/>
    <property type="match status" value="1"/>
</dbReference>
<dbReference type="Pfam" id="PF14579">
    <property type="entry name" value="HHH_6"/>
    <property type="match status" value="1"/>
</dbReference>
<dbReference type="Pfam" id="PF02811">
    <property type="entry name" value="PHP"/>
    <property type="match status" value="1"/>
</dbReference>
<dbReference type="SMART" id="SM00481">
    <property type="entry name" value="POLIIIAc"/>
    <property type="match status" value="1"/>
</dbReference>
<dbReference type="SUPFAM" id="SSF89550">
    <property type="entry name" value="PHP domain-like"/>
    <property type="match status" value="1"/>
</dbReference>
<comment type="function">
    <text evidence="1">DNA polymerase III is a complex, multichain enzyme responsible for most of the replicative synthesis in bacteria. This DNA polymerase also exhibits 3' to 5' exonuclease activity. The alpha chain is the DNA polymerase (By similarity).</text>
</comment>
<comment type="catalytic activity">
    <reaction>
        <text>DNA(n) + a 2'-deoxyribonucleoside 5'-triphosphate = DNA(n+1) + diphosphate</text>
        <dbReference type="Rhea" id="RHEA:22508"/>
        <dbReference type="Rhea" id="RHEA-COMP:17339"/>
        <dbReference type="Rhea" id="RHEA-COMP:17340"/>
        <dbReference type="ChEBI" id="CHEBI:33019"/>
        <dbReference type="ChEBI" id="CHEBI:61560"/>
        <dbReference type="ChEBI" id="CHEBI:173112"/>
        <dbReference type="EC" id="2.7.7.7"/>
    </reaction>
</comment>
<comment type="subunit">
    <text evidence="1">DNA polymerase III contains a core (composed of alpha, epsilon and theta chains) that associates with a tau subunit. This core dimerizes to form the PolIII' complex. PolIII' associates with the gamma complex (composed of gamma, delta, delta', psi and chi chains) and with the beta chain to form the complete DNA polymerase III complex (By similarity).</text>
</comment>
<comment type="subcellular location">
    <subcellularLocation>
        <location evidence="1">Cytoplasm</location>
    </subcellularLocation>
</comment>
<comment type="similarity">
    <text evidence="2">Belongs to the DNA polymerase type-C family. DnaE subfamily.</text>
</comment>
<proteinExistence type="inferred from homology"/>
<protein>
    <recommendedName>
        <fullName>DNA polymerase III subunit alpha</fullName>
        <ecNumber>2.7.7.7</ecNumber>
    </recommendedName>
</protein>
<evidence type="ECO:0000250" key="1"/>
<evidence type="ECO:0000305" key="2"/>
<sequence length="1172" mass="131797">MQTEFIHLRTQSSYSFLASALTTEKIVELASSYKMAAICLTDKENLFGSLEFALYAIKKGLQPIHGVILNIQYETGVFAEILLIAKDETGYKNLLKLSSITFTTNDRKICNHITFEDLKEHQEGLITLCCYTEGVIGKCLLANKEEQAEMFARNLQEIFGDRFYFEIMRHDLPEEQLIEDNYIKIASKLNIPLVATNKVLFSKKSMHDAHDVLLCISAGVTKEYPDRKTVSENCYFKSAKEMIELFADLPSAIENTVNLTQRCYFAAHTNPPMLPNFATKDISETDLIRKEAKDGLLARLDTKFKSEHISIEHQESIKTEYFARLDYELNIICSMNFAGYFLIVSDFIKWSKKQGILVGPGRGSGAGSVVAWSLLITDLDPIKFGLLFERFLNPDRISMPDFDIDFCQERREEVINYVRSKYGNNRVGQIITFGKMQAKAVIKDVARVLSLPYKFADYLTELVPFSAINPVTLEQAIREVPELANAAKGNGLYNLEGELELIKLVLDTSLILEGLHRHSSTHAAGIVIAGTDLVDIVPVYKDANSDMLVVGYSMKYCELAGLIKFDFLGLQTLTVITDCKKLLKEQNIEIDFNDMTFDDEKTYQMLCKGKGVGVFQFESVGMKDALRRLKPDSIHDLIALGALYRPGPMENIPTYIACKHKLQQPDYLHELLKPILEETYGVVIYQEQVQRIAQVLAGYTLGAADLLRRAMGKKIKAEMEQQEEIFVKGAIANNISEAQAKSIFATVAKFAGYGFNKAHAAAYGVISYQTAYLKANYPAEFVVACLNLELNNHDKINLFLQEAKDNNIKIIAPNINISGGYFSVKSVIPRLDCGIHGDQLKDTAVKPQYDIDSSIIFALGAIKGVTPNFGKLVTDERNARGAFKSIVDFIERLPPKAINSKLLENLIKAGCFDELHDNRLQLFLSISKLLAYSVSYHEEQASNQFSLIKVSSLSKEILVSSDYADKNTLAFYEFEAMGLFISNHPLTEYKEIFNRLNILSSADLHNNLPDGTNRVMIAGVIQKKDSRMSARGRFVTLVLSDPENIFELSIFSEEVLKDYVHLLDVKSLVVVNCDIIKDEGGIKITAKSFSSIENATGNQQFDLQLYPKNDEELEQIITLLSARINNDEQSNTIATIYLSNKSVKNFVAKITFPEKFFLKGQDFEILSIYQNT</sequence>
<reference key="1">
    <citation type="journal article" date="2006" name="PLoS Genet.">
        <title>Genome sequence of Rickettsia bellii illuminates the role of amoebae in gene exchanges between intracellular pathogens.</title>
        <authorList>
            <person name="Ogata H."/>
            <person name="La Scola B."/>
            <person name="Audic S."/>
            <person name="Renesto P."/>
            <person name="Blanc G."/>
            <person name="Robert C."/>
            <person name="Fournier P.-E."/>
            <person name="Claverie J.-M."/>
            <person name="Raoult D."/>
        </authorList>
    </citation>
    <scope>NUCLEOTIDE SEQUENCE [LARGE SCALE GENOMIC DNA]</scope>
    <source>
        <strain>RML369-C</strain>
    </source>
</reference>
<accession>Q1RKF9</accession>
<organism>
    <name type="scientific">Rickettsia bellii (strain RML369-C)</name>
    <dbReference type="NCBI Taxonomy" id="336407"/>
    <lineage>
        <taxon>Bacteria</taxon>
        <taxon>Pseudomonadati</taxon>
        <taxon>Pseudomonadota</taxon>
        <taxon>Alphaproteobacteria</taxon>
        <taxon>Rickettsiales</taxon>
        <taxon>Rickettsiaceae</taxon>
        <taxon>Rickettsieae</taxon>
        <taxon>Rickettsia</taxon>
        <taxon>belli group</taxon>
    </lineage>
</organism>
<name>DPO3A_RICBR</name>
<feature type="chain" id="PRO_0000280955" description="DNA polymerase III subunit alpha">
    <location>
        <begin position="1"/>
        <end position="1172"/>
    </location>
</feature>
<keyword id="KW-0963">Cytoplasm</keyword>
<keyword id="KW-0235">DNA replication</keyword>
<keyword id="KW-0239">DNA-directed DNA polymerase</keyword>
<keyword id="KW-0548">Nucleotidyltransferase</keyword>
<keyword id="KW-0808">Transferase</keyword>